<name>AROA_STRP7</name>
<proteinExistence type="inferred from homology"/>
<sequence>MKLKTNIRHLHGSIRVPGDKSISHRSIIFGSLAEGETKVYDILRGEDVLSTMQVFRDLGVEIEDKDGVITIQGVGMAGLKAPQNALNMGNSGTSIRLISGVLAGADFEVEMFGDDSLSKRPMDRVTLPLKKMGVSISGQTERDLPPLRLKGTKNLRPIHYELPIASAQVKSALMFAALQAKGESVIIEKECTRNHTEDMLKQFGGHLSVDGKKITVQGPQKLTGQKVVVPGDISSAAFWLVAGLIVPNSRLVLQNVGINETRTGIIDVIRAMGGKLEITEIDPVAKSSTLTVESSDLKGTEIGGALIPRLIDELPIIALLATQAQGVTVIKDAEELKVKETDRIQVVADALNSMGADITPTADGMIIKGKSALHGARVNTFGDHRIGMMTAIAALLVADGEVELDRAEAINTSYPSFFDDLESLIHG</sequence>
<evidence type="ECO:0000255" key="1">
    <source>
        <dbReference type="HAMAP-Rule" id="MF_00210"/>
    </source>
</evidence>
<dbReference type="EC" id="2.5.1.19" evidence="1"/>
<dbReference type="EMBL" id="CP000918">
    <property type="protein sequence ID" value="ACO16466.1"/>
    <property type="molecule type" value="Genomic_DNA"/>
</dbReference>
<dbReference type="RefSeq" id="WP_000769886.1">
    <property type="nucleotide sequence ID" value="NC_012468.1"/>
</dbReference>
<dbReference type="SMR" id="C1C7X2"/>
<dbReference type="KEGG" id="snm:SP70585_1410"/>
<dbReference type="HOGENOM" id="CLU_024321_0_1_9"/>
<dbReference type="UniPathway" id="UPA00053">
    <property type="reaction ID" value="UER00089"/>
</dbReference>
<dbReference type="Proteomes" id="UP000002211">
    <property type="component" value="Chromosome"/>
</dbReference>
<dbReference type="GO" id="GO:0005737">
    <property type="term" value="C:cytoplasm"/>
    <property type="evidence" value="ECO:0007669"/>
    <property type="project" value="UniProtKB-SubCell"/>
</dbReference>
<dbReference type="GO" id="GO:0003866">
    <property type="term" value="F:3-phosphoshikimate 1-carboxyvinyltransferase activity"/>
    <property type="evidence" value="ECO:0007669"/>
    <property type="project" value="UniProtKB-UniRule"/>
</dbReference>
<dbReference type="GO" id="GO:0008652">
    <property type="term" value="P:amino acid biosynthetic process"/>
    <property type="evidence" value="ECO:0007669"/>
    <property type="project" value="UniProtKB-KW"/>
</dbReference>
<dbReference type="GO" id="GO:0009073">
    <property type="term" value="P:aromatic amino acid family biosynthetic process"/>
    <property type="evidence" value="ECO:0007669"/>
    <property type="project" value="UniProtKB-KW"/>
</dbReference>
<dbReference type="GO" id="GO:0009423">
    <property type="term" value="P:chorismate biosynthetic process"/>
    <property type="evidence" value="ECO:0007669"/>
    <property type="project" value="UniProtKB-UniRule"/>
</dbReference>
<dbReference type="CDD" id="cd01554">
    <property type="entry name" value="EPT-like"/>
    <property type="match status" value="1"/>
</dbReference>
<dbReference type="FunFam" id="3.65.10.10:FF:000005">
    <property type="entry name" value="3-phosphoshikimate 1-carboxyvinyltransferase"/>
    <property type="match status" value="1"/>
</dbReference>
<dbReference type="FunFam" id="3.65.10.10:FF:000006">
    <property type="entry name" value="3-phosphoshikimate 1-carboxyvinyltransferase"/>
    <property type="match status" value="1"/>
</dbReference>
<dbReference type="Gene3D" id="3.65.10.10">
    <property type="entry name" value="Enolpyruvate transferase domain"/>
    <property type="match status" value="2"/>
</dbReference>
<dbReference type="HAMAP" id="MF_00210">
    <property type="entry name" value="EPSP_synth"/>
    <property type="match status" value="1"/>
</dbReference>
<dbReference type="InterPro" id="IPR001986">
    <property type="entry name" value="Enolpyruvate_Tfrase_dom"/>
</dbReference>
<dbReference type="InterPro" id="IPR036968">
    <property type="entry name" value="Enolpyruvate_Tfrase_sf"/>
</dbReference>
<dbReference type="InterPro" id="IPR006264">
    <property type="entry name" value="EPSP_synthase"/>
</dbReference>
<dbReference type="InterPro" id="IPR023193">
    <property type="entry name" value="EPSP_synthase_CS"/>
</dbReference>
<dbReference type="InterPro" id="IPR013792">
    <property type="entry name" value="RNA3'P_cycl/enolpyr_Trfase_a/b"/>
</dbReference>
<dbReference type="NCBIfam" id="TIGR01356">
    <property type="entry name" value="aroA"/>
    <property type="match status" value="1"/>
</dbReference>
<dbReference type="PANTHER" id="PTHR21090">
    <property type="entry name" value="AROM/DEHYDROQUINATE SYNTHASE"/>
    <property type="match status" value="1"/>
</dbReference>
<dbReference type="PANTHER" id="PTHR21090:SF5">
    <property type="entry name" value="PENTAFUNCTIONAL AROM POLYPEPTIDE"/>
    <property type="match status" value="1"/>
</dbReference>
<dbReference type="Pfam" id="PF00275">
    <property type="entry name" value="EPSP_synthase"/>
    <property type="match status" value="1"/>
</dbReference>
<dbReference type="PIRSF" id="PIRSF000505">
    <property type="entry name" value="EPSPS"/>
    <property type="match status" value="1"/>
</dbReference>
<dbReference type="SUPFAM" id="SSF55205">
    <property type="entry name" value="EPT/RTPC-like"/>
    <property type="match status" value="1"/>
</dbReference>
<dbReference type="PROSITE" id="PS00104">
    <property type="entry name" value="EPSP_SYNTHASE_1"/>
    <property type="match status" value="1"/>
</dbReference>
<dbReference type="PROSITE" id="PS00885">
    <property type="entry name" value="EPSP_SYNTHASE_2"/>
    <property type="match status" value="1"/>
</dbReference>
<keyword id="KW-0028">Amino-acid biosynthesis</keyword>
<keyword id="KW-0057">Aromatic amino acid biosynthesis</keyword>
<keyword id="KW-0963">Cytoplasm</keyword>
<keyword id="KW-0808">Transferase</keyword>
<gene>
    <name evidence="1" type="primary">aroA</name>
    <name type="ordered locus">SP70585_1410</name>
</gene>
<protein>
    <recommendedName>
        <fullName evidence="1">3-phosphoshikimate 1-carboxyvinyltransferase</fullName>
        <ecNumber evidence="1">2.5.1.19</ecNumber>
    </recommendedName>
    <alternativeName>
        <fullName evidence="1">5-enolpyruvylshikimate-3-phosphate synthase</fullName>
        <shortName evidence="1">EPSP synthase</shortName>
        <shortName evidence="1">EPSPS</shortName>
    </alternativeName>
</protein>
<accession>C1C7X2</accession>
<feature type="chain" id="PRO_1000124708" description="3-phosphoshikimate 1-carboxyvinyltransferase">
    <location>
        <begin position="1"/>
        <end position="427"/>
    </location>
</feature>
<feature type="active site" description="Proton acceptor" evidence="1">
    <location>
        <position position="312"/>
    </location>
</feature>
<feature type="binding site" evidence="1">
    <location>
        <position position="20"/>
    </location>
    <ligand>
        <name>3-phosphoshikimate</name>
        <dbReference type="ChEBI" id="CHEBI:145989"/>
    </ligand>
</feature>
<feature type="binding site" evidence="1">
    <location>
        <position position="20"/>
    </location>
    <ligand>
        <name>phosphoenolpyruvate</name>
        <dbReference type="ChEBI" id="CHEBI:58702"/>
    </ligand>
</feature>
<feature type="binding site" evidence="1">
    <location>
        <position position="21"/>
    </location>
    <ligand>
        <name>3-phosphoshikimate</name>
        <dbReference type="ChEBI" id="CHEBI:145989"/>
    </ligand>
</feature>
<feature type="binding site" evidence="1">
    <location>
        <position position="25"/>
    </location>
    <ligand>
        <name>3-phosphoshikimate</name>
        <dbReference type="ChEBI" id="CHEBI:145989"/>
    </ligand>
</feature>
<feature type="binding site" evidence="1">
    <location>
        <position position="92"/>
    </location>
    <ligand>
        <name>phosphoenolpyruvate</name>
        <dbReference type="ChEBI" id="CHEBI:58702"/>
    </ligand>
</feature>
<feature type="binding site" evidence="1">
    <location>
        <position position="120"/>
    </location>
    <ligand>
        <name>phosphoenolpyruvate</name>
        <dbReference type="ChEBI" id="CHEBI:58702"/>
    </ligand>
</feature>
<feature type="binding site" evidence="1">
    <location>
        <position position="166"/>
    </location>
    <ligand>
        <name>3-phosphoshikimate</name>
        <dbReference type="ChEBI" id="CHEBI:145989"/>
    </ligand>
</feature>
<feature type="binding site" evidence="1">
    <location>
        <position position="168"/>
    </location>
    <ligand>
        <name>3-phosphoshikimate</name>
        <dbReference type="ChEBI" id="CHEBI:145989"/>
    </ligand>
</feature>
<feature type="binding site" evidence="1">
    <location>
        <position position="168"/>
    </location>
    <ligand>
        <name>phosphoenolpyruvate</name>
        <dbReference type="ChEBI" id="CHEBI:58702"/>
    </ligand>
</feature>
<feature type="binding site" evidence="1">
    <location>
        <position position="312"/>
    </location>
    <ligand>
        <name>3-phosphoshikimate</name>
        <dbReference type="ChEBI" id="CHEBI:145989"/>
    </ligand>
</feature>
<feature type="binding site" evidence="1">
    <location>
        <position position="339"/>
    </location>
    <ligand>
        <name>3-phosphoshikimate</name>
        <dbReference type="ChEBI" id="CHEBI:145989"/>
    </ligand>
</feature>
<feature type="binding site" evidence="1">
    <location>
        <position position="343"/>
    </location>
    <ligand>
        <name>phosphoenolpyruvate</name>
        <dbReference type="ChEBI" id="CHEBI:58702"/>
    </ligand>
</feature>
<feature type="binding site" evidence="1">
    <location>
        <position position="385"/>
    </location>
    <ligand>
        <name>phosphoenolpyruvate</name>
        <dbReference type="ChEBI" id="CHEBI:58702"/>
    </ligand>
</feature>
<reference key="1">
    <citation type="journal article" date="2010" name="Genome Biol.">
        <title>Structure and dynamics of the pan-genome of Streptococcus pneumoniae and closely related species.</title>
        <authorList>
            <person name="Donati C."/>
            <person name="Hiller N.L."/>
            <person name="Tettelin H."/>
            <person name="Muzzi A."/>
            <person name="Croucher N.J."/>
            <person name="Angiuoli S.V."/>
            <person name="Oggioni M."/>
            <person name="Dunning Hotopp J.C."/>
            <person name="Hu F.Z."/>
            <person name="Riley D.R."/>
            <person name="Covacci A."/>
            <person name="Mitchell T.J."/>
            <person name="Bentley S.D."/>
            <person name="Kilian M."/>
            <person name="Ehrlich G.D."/>
            <person name="Rappuoli R."/>
            <person name="Moxon E.R."/>
            <person name="Masignani V."/>
        </authorList>
    </citation>
    <scope>NUCLEOTIDE SEQUENCE [LARGE SCALE GENOMIC DNA]</scope>
    <source>
        <strain>70585</strain>
    </source>
</reference>
<comment type="function">
    <text evidence="1">Catalyzes the transfer of the enolpyruvyl moiety of phosphoenolpyruvate (PEP) to the 5-hydroxyl of shikimate-3-phosphate (S3P) to produce enolpyruvyl shikimate-3-phosphate and inorganic phosphate.</text>
</comment>
<comment type="catalytic activity">
    <reaction evidence="1">
        <text>3-phosphoshikimate + phosphoenolpyruvate = 5-O-(1-carboxyvinyl)-3-phosphoshikimate + phosphate</text>
        <dbReference type="Rhea" id="RHEA:21256"/>
        <dbReference type="ChEBI" id="CHEBI:43474"/>
        <dbReference type="ChEBI" id="CHEBI:57701"/>
        <dbReference type="ChEBI" id="CHEBI:58702"/>
        <dbReference type="ChEBI" id="CHEBI:145989"/>
        <dbReference type="EC" id="2.5.1.19"/>
    </reaction>
    <physiologicalReaction direction="left-to-right" evidence="1">
        <dbReference type="Rhea" id="RHEA:21257"/>
    </physiologicalReaction>
</comment>
<comment type="pathway">
    <text evidence="1">Metabolic intermediate biosynthesis; chorismate biosynthesis; chorismate from D-erythrose 4-phosphate and phosphoenolpyruvate: step 6/7.</text>
</comment>
<comment type="subunit">
    <text evidence="1">Monomer.</text>
</comment>
<comment type="subcellular location">
    <subcellularLocation>
        <location evidence="1">Cytoplasm</location>
    </subcellularLocation>
</comment>
<comment type="similarity">
    <text evidence="1">Belongs to the EPSP synthase family.</text>
</comment>
<organism>
    <name type="scientific">Streptococcus pneumoniae (strain 70585)</name>
    <dbReference type="NCBI Taxonomy" id="488221"/>
    <lineage>
        <taxon>Bacteria</taxon>
        <taxon>Bacillati</taxon>
        <taxon>Bacillota</taxon>
        <taxon>Bacilli</taxon>
        <taxon>Lactobacillales</taxon>
        <taxon>Streptococcaceae</taxon>
        <taxon>Streptococcus</taxon>
    </lineage>
</organism>